<protein>
    <recommendedName>
        <fullName>E3 ubiquitin-protein ligase MARCHF4</fullName>
        <ecNumber>2.3.2.27</ecNumber>
    </recommendedName>
    <alternativeName>
        <fullName>Membrane-associated RING finger protein 4</fullName>
    </alternativeName>
    <alternativeName>
        <fullName>Membrane-associated RING-CH protein IV</fullName>
        <shortName>MARCH-IV</shortName>
    </alternativeName>
    <alternativeName>
        <fullName evidence="5">RING-type E3 ubiquitin transferase MARCHF4</fullName>
    </alternativeName>
</protein>
<evidence type="ECO:0000250" key="1"/>
<evidence type="ECO:0000255" key="2"/>
<evidence type="ECO:0000255" key="3">
    <source>
        <dbReference type="PROSITE-ProRule" id="PRU00623"/>
    </source>
</evidence>
<evidence type="ECO:0000256" key="4">
    <source>
        <dbReference type="SAM" id="MobiDB-lite"/>
    </source>
</evidence>
<evidence type="ECO:0000305" key="5"/>
<proteinExistence type="evidence at transcript level"/>
<feature type="signal peptide" evidence="2">
    <location>
        <begin position="1"/>
        <end position="16"/>
    </location>
</feature>
<feature type="chain" id="PRO_0000274510" description="E3 ubiquitin-protein ligase MARCHF4">
    <location>
        <begin position="17"/>
        <end position="421"/>
    </location>
</feature>
<feature type="transmembrane region" description="Helical" evidence="2">
    <location>
        <begin position="218"/>
        <end position="238"/>
    </location>
</feature>
<feature type="transmembrane region" description="Helical" evidence="2">
    <location>
        <begin position="252"/>
        <end position="272"/>
    </location>
</feature>
<feature type="zinc finger region" description="RING-CH-type" evidence="3">
    <location>
        <begin position="135"/>
        <end position="195"/>
    </location>
</feature>
<feature type="region of interest" description="Disordered" evidence="4">
    <location>
        <begin position="60"/>
        <end position="79"/>
    </location>
</feature>
<feature type="region of interest" description="Disordered" evidence="4">
    <location>
        <begin position="319"/>
        <end position="385"/>
    </location>
</feature>
<feature type="region of interest" description="Disordered" evidence="4">
    <location>
        <begin position="401"/>
        <end position="421"/>
    </location>
</feature>
<feature type="compositionally biased region" description="Polar residues" evidence="4">
    <location>
        <begin position="65"/>
        <end position="77"/>
    </location>
</feature>
<feature type="compositionally biased region" description="Polar residues" evidence="4">
    <location>
        <begin position="367"/>
        <end position="380"/>
    </location>
</feature>
<feature type="compositionally biased region" description="Polar residues" evidence="4">
    <location>
        <begin position="403"/>
        <end position="412"/>
    </location>
</feature>
<feature type="binding site" evidence="3">
    <location>
        <position position="143"/>
    </location>
    <ligand>
        <name>Zn(2+)</name>
        <dbReference type="ChEBI" id="CHEBI:29105"/>
        <label>1</label>
    </ligand>
</feature>
<feature type="binding site" evidence="3">
    <location>
        <position position="146"/>
    </location>
    <ligand>
        <name>Zn(2+)</name>
        <dbReference type="ChEBI" id="CHEBI:29105"/>
        <label>1</label>
    </ligand>
</feature>
<feature type="binding site" evidence="3">
    <location>
        <position position="159"/>
    </location>
    <ligand>
        <name>Zn(2+)</name>
        <dbReference type="ChEBI" id="CHEBI:29105"/>
        <label>2</label>
    </ligand>
</feature>
<feature type="binding site" evidence="3">
    <location>
        <position position="161"/>
    </location>
    <ligand>
        <name>Zn(2+)</name>
        <dbReference type="ChEBI" id="CHEBI:29105"/>
        <label>2</label>
    </ligand>
</feature>
<feature type="binding site" evidence="3">
    <location>
        <position position="169"/>
    </location>
    <ligand>
        <name>Zn(2+)</name>
        <dbReference type="ChEBI" id="CHEBI:29105"/>
        <label>1</label>
    </ligand>
</feature>
<feature type="binding site" evidence="3">
    <location>
        <position position="172"/>
    </location>
    <ligand>
        <name>Zn(2+)</name>
        <dbReference type="ChEBI" id="CHEBI:29105"/>
        <label>1</label>
    </ligand>
</feature>
<feature type="binding site" evidence="3">
    <location>
        <position position="185"/>
    </location>
    <ligand>
        <name>Zn(2+)</name>
        <dbReference type="ChEBI" id="CHEBI:29105"/>
        <label>2</label>
    </ligand>
</feature>
<feature type="binding site" evidence="3">
    <location>
        <position position="188"/>
    </location>
    <ligand>
        <name>Zn(2+)</name>
        <dbReference type="ChEBI" id="CHEBI:29105"/>
        <label>2</label>
    </ligand>
</feature>
<dbReference type="EC" id="2.3.2.27"/>
<dbReference type="EMBL" id="BC122209">
    <property type="protein sequence ID" value="AAI22210.1"/>
    <property type="molecule type" value="mRNA"/>
</dbReference>
<dbReference type="RefSeq" id="NP_001038876.1">
    <property type="nucleotide sequence ID" value="NM_001045411.1"/>
</dbReference>
<dbReference type="FunCoup" id="Q0P496">
    <property type="interactions" value="77"/>
</dbReference>
<dbReference type="STRING" id="7955.ENSDARP00000081369"/>
<dbReference type="PaxDb" id="7955-ENSDARP00000081369"/>
<dbReference type="GeneID" id="100000640"/>
<dbReference type="KEGG" id="dre:100000640"/>
<dbReference type="AGR" id="ZFIN:ZDB-GENE-060825-323"/>
<dbReference type="CTD" id="100000640"/>
<dbReference type="ZFIN" id="ZDB-GENE-060825-323">
    <property type="gene designation" value="marchf4a"/>
</dbReference>
<dbReference type="eggNOG" id="KOG1609">
    <property type="taxonomic scope" value="Eukaryota"/>
</dbReference>
<dbReference type="InParanoid" id="Q0P496"/>
<dbReference type="OrthoDB" id="264354at2759"/>
<dbReference type="PhylomeDB" id="Q0P496"/>
<dbReference type="UniPathway" id="UPA00143"/>
<dbReference type="PRO" id="PR:Q0P496"/>
<dbReference type="Proteomes" id="UP000000437">
    <property type="component" value="Alternate scaffold 1"/>
</dbReference>
<dbReference type="Proteomes" id="UP000000437">
    <property type="component" value="Chromosome 1"/>
</dbReference>
<dbReference type="GO" id="GO:0000139">
    <property type="term" value="C:Golgi membrane"/>
    <property type="evidence" value="ECO:0007669"/>
    <property type="project" value="UniProtKB-SubCell"/>
</dbReference>
<dbReference type="GO" id="GO:0005795">
    <property type="term" value="C:Golgi stack"/>
    <property type="evidence" value="ECO:0000250"/>
    <property type="project" value="UniProtKB"/>
</dbReference>
<dbReference type="GO" id="GO:0005802">
    <property type="term" value="C:trans-Golgi network"/>
    <property type="evidence" value="ECO:0000250"/>
    <property type="project" value="UniProtKB"/>
</dbReference>
<dbReference type="GO" id="GO:0004842">
    <property type="term" value="F:ubiquitin-protein transferase activity"/>
    <property type="evidence" value="ECO:0000250"/>
    <property type="project" value="UniProtKB"/>
</dbReference>
<dbReference type="GO" id="GO:0008270">
    <property type="term" value="F:zinc ion binding"/>
    <property type="evidence" value="ECO:0007669"/>
    <property type="project" value="UniProtKB-KW"/>
</dbReference>
<dbReference type="GO" id="GO:0016567">
    <property type="term" value="P:protein ubiquitination"/>
    <property type="evidence" value="ECO:0007669"/>
    <property type="project" value="UniProtKB-UniPathway"/>
</dbReference>
<dbReference type="CDD" id="cd16824">
    <property type="entry name" value="RING_CH-C4HC3_MARCH4"/>
    <property type="match status" value="1"/>
</dbReference>
<dbReference type="Gene3D" id="3.30.40.10">
    <property type="entry name" value="Zinc/RING finger domain, C3HC4 (zinc finger)"/>
    <property type="match status" value="1"/>
</dbReference>
<dbReference type="InterPro" id="IPR046356">
    <property type="entry name" value="MARCHF4/9/11"/>
</dbReference>
<dbReference type="InterPro" id="IPR047905">
    <property type="entry name" value="MARCHF4_RING_CH-C4HC3"/>
</dbReference>
<dbReference type="InterPro" id="IPR011016">
    <property type="entry name" value="Znf_RING-CH"/>
</dbReference>
<dbReference type="InterPro" id="IPR013083">
    <property type="entry name" value="Znf_RING/FYVE/PHD"/>
</dbReference>
<dbReference type="PANTHER" id="PTHR46053">
    <property type="entry name" value="E3 UBIQUITIN-PROTEIN LIGASE MARCH4-LIKE"/>
    <property type="match status" value="1"/>
</dbReference>
<dbReference type="PANTHER" id="PTHR46053:SF3">
    <property type="entry name" value="E3 UBIQUITIN-PROTEIN LIGASE MARCHF4"/>
    <property type="match status" value="1"/>
</dbReference>
<dbReference type="Pfam" id="PF12906">
    <property type="entry name" value="RINGv"/>
    <property type="match status" value="1"/>
</dbReference>
<dbReference type="SMART" id="SM00744">
    <property type="entry name" value="RINGv"/>
    <property type="match status" value="1"/>
</dbReference>
<dbReference type="SUPFAM" id="SSF57850">
    <property type="entry name" value="RING/U-box"/>
    <property type="match status" value="1"/>
</dbReference>
<dbReference type="PROSITE" id="PS51292">
    <property type="entry name" value="ZF_RING_CH"/>
    <property type="match status" value="1"/>
</dbReference>
<gene>
    <name type="primary">marchf4</name>
    <name type="synonym">march4</name>
    <name type="ORF">zgc:153256</name>
</gene>
<comment type="function">
    <text evidence="1">E3 ubiquitin-protein ligase. E3 ubiquitin ligases accept ubiquitin from an E2 ubiquitin-conjugating enzyme in the form of a thioester and then directly transfer the ubiquitin to targeted substrates.</text>
</comment>
<comment type="catalytic activity">
    <reaction>
        <text>S-ubiquitinyl-[E2 ubiquitin-conjugating enzyme]-L-cysteine + [acceptor protein]-L-lysine = [E2 ubiquitin-conjugating enzyme]-L-cysteine + N(6)-ubiquitinyl-[acceptor protein]-L-lysine.</text>
        <dbReference type="EC" id="2.3.2.27"/>
    </reaction>
</comment>
<comment type="pathway">
    <text>Protein modification; protein ubiquitination.</text>
</comment>
<comment type="subcellular location">
    <subcellularLocation>
        <location evidence="1">Golgi apparatus membrane</location>
        <topology evidence="1">Multi-pass membrane protein</topology>
    </subcellularLocation>
</comment>
<comment type="domain">
    <text evidence="3">The RING-CH-type zinc finger domain is required for E3 ligase activity.</text>
</comment>
<name>MARH4_DANRE</name>
<organism>
    <name type="scientific">Danio rerio</name>
    <name type="common">Zebrafish</name>
    <name type="synonym">Brachydanio rerio</name>
    <dbReference type="NCBI Taxonomy" id="7955"/>
    <lineage>
        <taxon>Eukaryota</taxon>
        <taxon>Metazoa</taxon>
        <taxon>Chordata</taxon>
        <taxon>Craniata</taxon>
        <taxon>Vertebrata</taxon>
        <taxon>Euteleostomi</taxon>
        <taxon>Actinopterygii</taxon>
        <taxon>Neopterygii</taxon>
        <taxon>Teleostei</taxon>
        <taxon>Ostariophysi</taxon>
        <taxon>Cypriniformes</taxon>
        <taxon>Danionidae</taxon>
        <taxon>Danioninae</taxon>
        <taxon>Danio</taxon>
    </lineage>
</organism>
<accession>Q0P496</accession>
<sequence length="421" mass="46352">MLLAIGVIVWCWGLLSRRPMLRRQGKQKGRCCVLFSDLEVFLLRPPTPSASPPAFTPMNELNAEGNATSSATESHSLANGHYQPVTGEEALDTRGPDDWTHSVVDPPRTLDCCSSSEDCSKEKLDERLSLNSCTDSGVRTPLCRICFQGPEQGELLSPCRCSGSVRCTHEPCLIKWISERGSWSCELCYYKYQVIAISTKNPLQWQAISLTVIEKVQIAAAVLGSLFLIASISWLVWSSLSPSAKWQRQDLLFQICYAMYGFMDLVCIALIVHEGPSVFRIFNRWQAVNQQWKVLNYDKVKDNEDHQKTGATFRTLSLPLTHRMGQSGPEGEPSTSTSSLMAAAAAAAAGTVTPTTNSVPPAAGATTEPQDSSEPSNGQPSLPDHHCAYNILHLLSHLRQQEPRGQTSNSNRELVMRVTTV</sequence>
<keyword id="KW-0333">Golgi apparatus</keyword>
<keyword id="KW-0472">Membrane</keyword>
<keyword id="KW-0479">Metal-binding</keyword>
<keyword id="KW-1185">Reference proteome</keyword>
<keyword id="KW-0732">Signal</keyword>
<keyword id="KW-0808">Transferase</keyword>
<keyword id="KW-0812">Transmembrane</keyword>
<keyword id="KW-1133">Transmembrane helix</keyword>
<keyword id="KW-0833">Ubl conjugation pathway</keyword>
<keyword id="KW-0862">Zinc</keyword>
<keyword id="KW-0863">Zinc-finger</keyword>
<reference key="1">
    <citation type="submission" date="2006-08" db="EMBL/GenBank/DDBJ databases">
        <authorList>
            <consortium name="NIH - Zebrafish Gene Collection (ZGC) project"/>
        </authorList>
    </citation>
    <scope>NUCLEOTIDE SEQUENCE [LARGE SCALE MRNA]</scope>
    <source>
        <tissue>Testis</tissue>
    </source>
</reference>